<dbReference type="EC" id="3.1.26.4" evidence="1"/>
<dbReference type="EMBL" id="CP000447">
    <property type="protein sequence ID" value="ABI72051.1"/>
    <property type="molecule type" value="Genomic_DNA"/>
</dbReference>
<dbReference type="RefSeq" id="WP_011637661.1">
    <property type="nucleotide sequence ID" value="NC_008345.1"/>
</dbReference>
<dbReference type="SMR" id="Q081L4"/>
<dbReference type="STRING" id="318167.Sfri_2205"/>
<dbReference type="KEGG" id="sfr:Sfri_2205"/>
<dbReference type="eggNOG" id="COG0328">
    <property type="taxonomic scope" value="Bacteria"/>
</dbReference>
<dbReference type="HOGENOM" id="CLU_030894_6_0_6"/>
<dbReference type="OrthoDB" id="7845843at2"/>
<dbReference type="Proteomes" id="UP000000684">
    <property type="component" value="Chromosome"/>
</dbReference>
<dbReference type="GO" id="GO:0005737">
    <property type="term" value="C:cytoplasm"/>
    <property type="evidence" value="ECO:0007669"/>
    <property type="project" value="UniProtKB-SubCell"/>
</dbReference>
<dbReference type="GO" id="GO:0000287">
    <property type="term" value="F:magnesium ion binding"/>
    <property type="evidence" value="ECO:0007669"/>
    <property type="project" value="UniProtKB-UniRule"/>
</dbReference>
<dbReference type="GO" id="GO:0003676">
    <property type="term" value="F:nucleic acid binding"/>
    <property type="evidence" value="ECO:0007669"/>
    <property type="project" value="InterPro"/>
</dbReference>
<dbReference type="GO" id="GO:0004523">
    <property type="term" value="F:RNA-DNA hybrid ribonuclease activity"/>
    <property type="evidence" value="ECO:0007669"/>
    <property type="project" value="UniProtKB-UniRule"/>
</dbReference>
<dbReference type="GO" id="GO:0043137">
    <property type="term" value="P:DNA replication, removal of RNA primer"/>
    <property type="evidence" value="ECO:0007669"/>
    <property type="project" value="TreeGrafter"/>
</dbReference>
<dbReference type="CDD" id="cd09278">
    <property type="entry name" value="RNase_HI_prokaryote_like"/>
    <property type="match status" value="1"/>
</dbReference>
<dbReference type="FunFam" id="3.30.420.10:FF:000008">
    <property type="entry name" value="Ribonuclease H"/>
    <property type="match status" value="1"/>
</dbReference>
<dbReference type="Gene3D" id="3.30.420.10">
    <property type="entry name" value="Ribonuclease H-like superfamily/Ribonuclease H"/>
    <property type="match status" value="1"/>
</dbReference>
<dbReference type="HAMAP" id="MF_00042">
    <property type="entry name" value="RNase_H"/>
    <property type="match status" value="1"/>
</dbReference>
<dbReference type="InterPro" id="IPR050092">
    <property type="entry name" value="RNase_H"/>
</dbReference>
<dbReference type="InterPro" id="IPR012337">
    <property type="entry name" value="RNaseH-like_sf"/>
</dbReference>
<dbReference type="InterPro" id="IPR002156">
    <property type="entry name" value="RNaseH_domain"/>
</dbReference>
<dbReference type="InterPro" id="IPR036397">
    <property type="entry name" value="RNaseH_sf"/>
</dbReference>
<dbReference type="InterPro" id="IPR022892">
    <property type="entry name" value="RNaseHI"/>
</dbReference>
<dbReference type="NCBIfam" id="NF001236">
    <property type="entry name" value="PRK00203.1"/>
    <property type="match status" value="1"/>
</dbReference>
<dbReference type="PANTHER" id="PTHR10642">
    <property type="entry name" value="RIBONUCLEASE H1"/>
    <property type="match status" value="1"/>
</dbReference>
<dbReference type="PANTHER" id="PTHR10642:SF26">
    <property type="entry name" value="RIBONUCLEASE H1"/>
    <property type="match status" value="1"/>
</dbReference>
<dbReference type="Pfam" id="PF00075">
    <property type="entry name" value="RNase_H"/>
    <property type="match status" value="1"/>
</dbReference>
<dbReference type="SUPFAM" id="SSF53098">
    <property type="entry name" value="Ribonuclease H-like"/>
    <property type="match status" value="1"/>
</dbReference>
<dbReference type="PROSITE" id="PS50879">
    <property type="entry name" value="RNASE_H_1"/>
    <property type="match status" value="1"/>
</dbReference>
<gene>
    <name evidence="1" type="primary">rnhA</name>
    <name type="ordered locus">Sfri_2205</name>
</gene>
<feature type="chain" id="PRO_1000074669" description="Ribonuclease H">
    <location>
        <begin position="1"/>
        <end position="157"/>
    </location>
</feature>
<feature type="domain" description="RNase H type-1" evidence="2">
    <location>
        <begin position="3"/>
        <end position="144"/>
    </location>
</feature>
<feature type="binding site" evidence="1">
    <location>
        <position position="12"/>
    </location>
    <ligand>
        <name>Mg(2+)</name>
        <dbReference type="ChEBI" id="CHEBI:18420"/>
        <label>1</label>
    </ligand>
</feature>
<feature type="binding site" evidence="1">
    <location>
        <position position="12"/>
    </location>
    <ligand>
        <name>Mg(2+)</name>
        <dbReference type="ChEBI" id="CHEBI:18420"/>
        <label>2</label>
    </ligand>
</feature>
<feature type="binding site" evidence="1">
    <location>
        <position position="50"/>
    </location>
    <ligand>
        <name>Mg(2+)</name>
        <dbReference type="ChEBI" id="CHEBI:18420"/>
        <label>1</label>
    </ligand>
</feature>
<feature type="binding site" evidence="1">
    <location>
        <position position="72"/>
    </location>
    <ligand>
        <name>Mg(2+)</name>
        <dbReference type="ChEBI" id="CHEBI:18420"/>
        <label>1</label>
    </ligand>
</feature>
<feature type="binding site" evidence="1">
    <location>
        <position position="136"/>
    </location>
    <ligand>
        <name>Mg(2+)</name>
        <dbReference type="ChEBI" id="CHEBI:18420"/>
        <label>2</label>
    </ligand>
</feature>
<keyword id="KW-0963">Cytoplasm</keyword>
<keyword id="KW-0255">Endonuclease</keyword>
<keyword id="KW-0378">Hydrolase</keyword>
<keyword id="KW-0460">Magnesium</keyword>
<keyword id="KW-0479">Metal-binding</keyword>
<keyword id="KW-0540">Nuclease</keyword>
<keyword id="KW-1185">Reference proteome</keyword>
<name>RNH_SHEFN</name>
<reference key="1">
    <citation type="submission" date="2006-08" db="EMBL/GenBank/DDBJ databases">
        <title>Complete sequence of Shewanella frigidimarina NCIMB 400.</title>
        <authorList>
            <consortium name="US DOE Joint Genome Institute"/>
            <person name="Copeland A."/>
            <person name="Lucas S."/>
            <person name="Lapidus A."/>
            <person name="Barry K."/>
            <person name="Detter J.C."/>
            <person name="Glavina del Rio T."/>
            <person name="Hammon N."/>
            <person name="Israni S."/>
            <person name="Dalin E."/>
            <person name="Tice H."/>
            <person name="Pitluck S."/>
            <person name="Fredrickson J.K."/>
            <person name="Kolker E."/>
            <person name="McCuel L.A."/>
            <person name="DiChristina T."/>
            <person name="Nealson K.H."/>
            <person name="Newman D."/>
            <person name="Tiedje J.M."/>
            <person name="Zhou J."/>
            <person name="Romine M.F."/>
            <person name="Culley D.E."/>
            <person name="Serres M."/>
            <person name="Chertkov O."/>
            <person name="Brettin T."/>
            <person name="Bruce D."/>
            <person name="Han C."/>
            <person name="Tapia R."/>
            <person name="Gilna P."/>
            <person name="Schmutz J."/>
            <person name="Larimer F."/>
            <person name="Land M."/>
            <person name="Hauser L."/>
            <person name="Kyrpides N."/>
            <person name="Mikhailova N."/>
            <person name="Richardson P."/>
        </authorList>
    </citation>
    <scope>NUCLEOTIDE SEQUENCE [LARGE SCALE GENOMIC DNA]</scope>
    <source>
        <strain>NCIMB 400</strain>
    </source>
</reference>
<proteinExistence type="inferred from homology"/>
<sequence>MAELKQLYIFTDGSCLGNPGPGGYGVVMKYKHQQHEIADGFSLTTNNRMELLAPIIALETLYEPCNIILTSDSQYMRQGIMTWIHGWKKKGWITSTKQPVKNVDLWKRLDAVSQLHKIDWHWVKGHAGHIENERCDVLARKAAEAKPQQVDTGYNPE</sequence>
<protein>
    <recommendedName>
        <fullName evidence="1">Ribonuclease H</fullName>
        <shortName evidence="1">RNase H</shortName>
        <ecNumber evidence="1">3.1.26.4</ecNumber>
    </recommendedName>
</protein>
<accession>Q081L4</accession>
<evidence type="ECO:0000255" key="1">
    <source>
        <dbReference type="HAMAP-Rule" id="MF_00042"/>
    </source>
</evidence>
<evidence type="ECO:0000255" key="2">
    <source>
        <dbReference type="PROSITE-ProRule" id="PRU00408"/>
    </source>
</evidence>
<organism>
    <name type="scientific">Shewanella frigidimarina (strain NCIMB 400)</name>
    <dbReference type="NCBI Taxonomy" id="318167"/>
    <lineage>
        <taxon>Bacteria</taxon>
        <taxon>Pseudomonadati</taxon>
        <taxon>Pseudomonadota</taxon>
        <taxon>Gammaproteobacteria</taxon>
        <taxon>Alteromonadales</taxon>
        <taxon>Shewanellaceae</taxon>
        <taxon>Shewanella</taxon>
    </lineage>
</organism>
<comment type="function">
    <text evidence="1">Endonuclease that specifically degrades the RNA of RNA-DNA hybrids.</text>
</comment>
<comment type="catalytic activity">
    <reaction evidence="1">
        <text>Endonucleolytic cleavage to 5'-phosphomonoester.</text>
        <dbReference type="EC" id="3.1.26.4"/>
    </reaction>
</comment>
<comment type="cofactor">
    <cofactor evidence="1">
        <name>Mg(2+)</name>
        <dbReference type="ChEBI" id="CHEBI:18420"/>
    </cofactor>
    <text evidence="1">Binds 1 Mg(2+) ion per subunit. May bind a second metal ion at a regulatory site, or after substrate binding.</text>
</comment>
<comment type="subunit">
    <text evidence="1">Monomer.</text>
</comment>
<comment type="subcellular location">
    <subcellularLocation>
        <location evidence="1">Cytoplasm</location>
    </subcellularLocation>
</comment>
<comment type="similarity">
    <text evidence="1">Belongs to the RNase H family.</text>
</comment>